<comment type="function">
    <text>Transcriptional activator for the cbb operon for RuBisCO and other Calvin cycle genes.</text>
</comment>
<comment type="similarity">
    <text evidence="2">Belongs to the LysR transcriptional regulatory family.</text>
</comment>
<feature type="chain" id="PRO_0000105607" description="HTH-type transcriptional regulator CbbR">
    <location>
        <begin position="1"/>
        <end position="310"/>
    </location>
</feature>
<feature type="domain" description="HTH lysR-type" evidence="1">
    <location>
        <begin position="7"/>
        <end position="64"/>
    </location>
</feature>
<feature type="DNA-binding region" description="H-T-H motif" evidence="1">
    <location>
        <begin position="24"/>
        <end position="43"/>
    </location>
</feature>
<proteinExistence type="inferred from homology"/>
<gene>
    <name type="primary">cbbR</name>
</gene>
<name>CBBR_CERSP</name>
<protein>
    <recommendedName>
        <fullName>HTH-type transcriptional regulator CbbR</fullName>
    </recommendedName>
    <alternativeName>
        <fullName>RuBisCO operon transcriptional regulator</fullName>
    </alternativeName>
</protein>
<accession>P52690</accession>
<evidence type="ECO:0000255" key="1">
    <source>
        <dbReference type="PROSITE-ProRule" id="PRU00253"/>
    </source>
</evidence>
<evidence type="ECO:0000305" key="2"/>
<sequence>MVRLDAITLKQLRALVAVAGSASLTGGATRLGLTPPAIHSQIRNLEEAFGVPLLHRPPETGSFTPTLAGIAVLEAAQRIEVILSQCSYQVMAVSEGRAGQVTLGVVSTGRYFAPRLVKMLSLACPEIRIALRVGNREQLIDDLARHMVDLAVMGRPPRQPEVASVALGPHPHGIVAPPDHPLAGLAEVPVPDLLSQTFLARAEGSGTRVLMSRYLDRLGEGQVVDLIEMDSNETIKQSVIAGLGLAFLSLHVVMDELRFGQLVQLAAPGLPIERHWFLVHPVDRPLNPAALRVQGEIVKLKGAYLPGAPA</sequence>
<organism>
    <name type="scientific">Cereibacter sphaeroides</name>
    <name type="common">Rhodobacter sphaeroides</name>
    <dbReference type="NCBI Taxonomy" id="1063"/>
    <lineage>
        <taxon>Bacteria</taxon>
        <taxon>Pseudomonadati</taxon>
        <taxon>Pseudomonadota</taxon>
        <taxon>Alphaproteobacteria</taxon>
        <taxon>Rhodobacterales</taxon>
        <taxon>Paracoccaceae</taxon>
        <taxon>Cereibacter</taxon>
    </lineage>
</organism>
<dbReference type="EMBL" id="L20695">
    <property type="status" value="NOT_ANNOTATED_CDS"/>
    <property type="molecule type" value="Unassigned_DNA"/>
</dbReference>
<dbReference type="PIR" id="A48485">
    <property type="entry name" value="A48485"/>
</dbReference>
<dbReference type="SMR" id="P52690"/>
<dbReference type="IntAct" id="P52690">
    <property type="interactions" value="1"/>
</dbReference>
<dbReference type="GO" id="GO:0003700">
    <property type="term" value="F:DNA-binding transcription factor activity"/>
    <property type="evidence" value="ECO:0007669"/>
    <property type="project" value="InterPro"/>
</dbReference>
<dbReference type="GO" id="GO:0000976">
    <property type="term" value="F:transcription cis-regulatory region binding"/>
    <property type="evidence" value="ECO:0007669"/>
    <property type="project" value="TreeGrafter"/>
</dbReference>
<dbReference type="Gene3D" id="3.40.190.10">
    <property type="entry name" value="Periplasmic binding protein-like II"/>
    <property type="match status" value="2"/>
</dbReference>
<dbReference type="Gene3D" id="1.10.10.10">
    <property type="entry name" value="Winged helix-like DNA-binding domain superfamily/Winged helix DNA-binding domain"/>
    <property type="match status" value="1"/>
</dbReference>
<dbReference type="InterPro" id="IPR005119">
    <property type="entry name" value="LysR_subst-bd"/>
</dbReference>
<dbReference type="InterPro" id="IPR000847">
    <property type="entry name" value="Tscrpt_reg_HTH_LysR"/>
</dbReference>
<dbReference type="InterPro" id="IPR036388">
    <property type="entry name" value="WH-like_DNA-bd_sf"/>
</dbReference>
<dbReference type="InterPro" id="IPR036390">
    <property type="entry name" value="WH_DNA-bd_sf"/>
</dbReference>
<dbReference type="NCBIfam" id="NF045990">
    <property type="entry name" value="TransRegCbbRRhodb"/>
    <property type="match status" value="1"/>
</dbReference>
<dbReference type="PANTHER" id="PTHR30126:SF5">
    <property type="entry name" value="HTH-TYPE TRANSCRIPTIONAL ACTIVATOR CMPR"/>
    <property type="match status" value="1"/>
</dbReference>
<dbReference type="PANTHER" id="PTHR30126">
    <property type="entry name" value="HTH-TYPE TRANSCRIPTIONAL REGULATOR"/>
    <property type="match status" value="1"/>
</dbReference>
<dbReference type="Pfam" id="PF00126">
    <property type="entry name" value="HTH_1"/>
    <property type="match status" value="1"/>
</dbReference>
<dbReference type="Pfam" id="PF03466">
    <property type="entry name" value="LysR_substrate"/>
    <property type="match status" value="1"/>
</dbReference>
<dbReference type="SUPFAM" id="SSF53850">
    <property type="entry name" value="Periplasmic binding protein-like II"/>
    <property type="match status" value="1"/>
</dbReference>
<dbReference type="SUPFAM" id="SSF46785">
    <property type="entry name" value="Winged helix' DNA-binding domain"/>
    <property type="match status" value="1"/>
</dbReference>
<dbReference type="PROSITE" id="PS50931">
    <property type="entry name" value="HTH_LYSR"/>
    <property type="match status" value="1"/>
</dbReference>
<keyword id="KW-0010">Activator</keyword>
<keyword id="KW-0238">DNA-binding</keyword>
<keyword id="KW-0804">Transcription</keyword>
<keyword id="KW-0805">Transcription regulation</keyword>
<reference key="1">
    <citation type="journal article" date="1993" name="J. Bacteriol.">
        <title>Nucleotide sequence and functional analysis of cbbR, a positive regulator of the Calvin cycle operons of Rhodobacter sphaeroides.</title>
        <authorList>
            <person name="Gibson J.L."/>
            <person name="Tabita F.R."/>
        </authorList>
    </citation>
    <scope>NUCLEOTIDE SEQUENCE [GENOMIC DNA]</scope>
</reference>